<reference key="1">
    <citation type="journal article" date="2002" name="Genome Res.">
        <title>The genome of Methanosarcina acetivorans reveals extensive metabolic and physiological diversity.</title>
        <authorList>
            <person name="Galagan J.E."/>
            <person name="Nusbaum C."/>
            <person name="Roy A."/>
            <person name="Endrizzi M.G."/>
            <person name="Macdonald P."/>
            <person name="FitzHugh W."/>
            <person name="Calvo S."/>
            <person name="Engels R."/>
            <person name="Smirnov S."/>
            <person name="Atnoor D."/>
            <person name="Brown A."/>
            <person name="Allen N."/>
            <person name="Naylor J."/>
            <person name="Stange-Thomann N."/>
            <person name="DeArellano K."/>
            <person name="Johnson R."/>
            <person name="Linton L."/>
            <person name="McEwan P."/>
            <person name="McKernan K."/>
            <person name="Talamas J."/>
            <person name="Tirrell A."/>
            <person name="Ye W."/>
            <person name="Zimmer A."/>
            <person name="Barber R.D."/>
            <person name="Cann I."/>
            <person name="Graham D.E."/>
            <person name="Grahame D.A."/>
            <person name="Guss A.M."/>
            <person name="Hedderich R."/>
            <person name="Ingram-Smith C."/>
            <person name="Kuettner H.C."/>
            <person name="Krzycki J.A."/>
            <person name="Leigh J.A."/>
            <person name="Li W."/>
            <person name="Liu J."/>
            <person name="Mukhopadhyay B."/>
            <person name="Reeve J.N."/>
            <person name="Smith K."/>
            <person name="Springer T.A."/>
            <person name="Umayam L.A."/>
            <person name="White O."/>
            <person name="White R.H."/>
            <person name="de Macario E.C."/>
            <person name="Ferry J.G."/>
            <person name="Jarrell K.F."/>
            <person name="Jing H."/>
            <person name="Macario A.J.L."/>
            <person name="Paulsen I.T."/>
            <person name="Pritchett M."/>
            <person name="Sowers K.R."/>
            <person name="Swanson R.V."/>
            <person name="Zinder S.H."/>
            <person name="Lander E."/>
            <person name="Metcalf W.W."/>
            <person name="Birren B."/>
        </authorList>
    </citation>
    <scope>NUCLEOTIDE SEQUENCE [LARGE SCALE GENOMIC DNA]</scope>
    <source>
        <strain>ATCC 35395 / DSM 2834 / JCM 12185 / C2A</strain>
    </source>
</reference>
<keyword id="KW-0030">Aminoacyl-tRNA synthetase</keyword>
<keyword id="KW-0067">ATP-binding</keyword>
<keyword id="KW-0963">Cytoplasm</keyword>
<keyword id="KW-0436">Ligase</keyword>
<keyword id="KW-0547">Nucleotide-binding</keyword>
<keyword id="KW-0648">Protein biosynthesis</keyword>
<keyword id="KW-1185">Reference proteome</keyword>
<gene>
    <name evidence="1" type="primary">tyrS</name>
    <name type="ordered locus">MA_0815</name>
</gene>
<protein>
    <recommendedName>
        <fullName evidence="1">Tyrosine--tRNA ligase</fullName>
        <ecNumber evidence="1">6.1.1.1</ecNumber>
    </recommendedName>
    <alternativeName>
        <fullName evidence="1">Tyrosyl-tRNA synthetase</fullName>
        <shortName evidence="1">TyrRS</shortName>
    </alternativeName>
</protein>
<proteinExistence type="inferred from homology"/>
<organism>
    <name type="scientific">Methanosarcina acetivorans (strain ATCC 35395 / DSM 2834 / JCM 12185 / C2A)</name>
    <dbReference type="NCBI Taxonomy" id="188937"/>
    <lineage>
        <taxon>Archaea</taxon>
        <taxon>Methanobacteriati</taxon>
        <taxon>Methanobacteriota</taxon>
        <taxon>Stenosarchaea group</taxon>
        <taxon>Methanomicrobia</taxon>
        <taxon>Methanosarcinales</taxon>
        <taxon>Methanosarcinaceae</taxon>
        <taxon>Methanosarcina</taxon>
    </lineage>
</organism>
<accession>Q8TSI1</accession>
<name>SYY_METAC</name>
<dbReference type="EC" id="6.1.1.1" evidence="1"/>
<dbReference type="EMBL" id="AE010299">
    <property type="protein sequence ID" value="AAM04254.1"/>
    <property type="molecule type" value="Genomic_DNA"/>
</dbReference>
<dbReference type="RefSeq" id="WP_011020859.1">
    <property type="nucleotide sequence ID" value="NC_003552.1"/>
</dbReference>
<dbReference type="SMR" id="Q8TSI1"/>
<dbReference type="FunCoup" id="Q8TSI1">
    <property type="interactions" value="230"/>
</dbReference>
<dbReference type="STRING" id="188937.MA_0815"/>
<dbReference type="EnsemblBacteria" id="AAM04254">
    <property type="protein sequence ID" value="AAM04254"/>
    <property type="gene ID" value="MA_0815"/>
</dbReference>
<dbReference type="GeneID" id="1472707"/>
<dbReference type="KEGG" id="mac:MA_0815"/>
<dbReference type="HOGENOM" id="CLU_035267_0_1_2"/>
<dbReference type="InParanoid" id="Q8TSI1"/>
<dbReference type="OrthoDB" id="8389at2157"/>
<dbReference type="PhylomeDB" id="Q8TSI1"/>
<dbReference type="Proteomes" id="UP000002487">
    <property type="component" value="Chromosome"/>
</dbReference>
<dbReference type="GO" id="GO:0005737">
    <property type="term" value="C:cytoplasm"/>
    <property type="evidence" value="ECO:0000318"/>
    <property type="project" value="GO_Central"/>
</dbReference>
<dbReference type="GO" id="GO:0005524">
    <property type="term" value="F:ATP binding"/>
    <property type="evidence" value="ECO:0007669"/>
    <property type="project" value="UniProtKB-UniRule"/>
</dbReference>
<dbReference type="GO" id="GO:0004831">
    <property type="term" value="F:tyrosine-tRNA ligase activity"/>
    <property type="evidence" value="ECO:0000318"/>
    <property type="project" value="GO_Central"/>
</dbReference>
<dbReference type="GO" id="GO:0006437">
    <property type="term" value="P:tyrosyl-tRNA aminoacylation"/>
    <property type="evidence" value="ECO:0000318"/>
    <property type="project" value="GO_Central"/>
</dbReference>
<dbReference type="CDD" id="cd00805">
    <property type="entry name" value="TyrRS_core"/>
    <property type="match status" value="1"/>
</dbReference>
<dbReference type="Gene3D" id="3.40.50.620">
    <property type="entry name" value="HUPs"/>
    <property type="match status" value="1"/>
</dbReference>
<dbReference type="Gene3D" id="1.10.240.10">
    <property type="entry name" value="Tyrosyl-Transfer RNA Synthetase"/>
    <property type="match status" value="1"/>
</dbReference>
<dbReference type="HAMAP" id="MF_02008">
    <property type="entry name" value="Tyr_tRNA_synth_type3"/>
    <property type="match status" value="1"/>
</dbReference>
<dbReference type="InterPro" id="IPR001412">
    <property type="entry name" value="aa-tRNA-synth_I_CS"/>
</dbReference>
<dbReference type="InterPro" id="IPR002305">
    <property type="entry name" value="aa-tRNA-synth_Ic"/>
</dbReference>
<dbReference type="InterPro" id="IPR014729">
    <property type="entry name" value="Rossmann-like_a/b/a_fold"/>
</dbReference>
<dbReference type="InterPro" id="IPR002307">
    <property type="entry name" value="Tyr-tRNA-ligase"/>
</dbReference>
<dbReference type="InterPro" id="IPR023684">
    <property type="entry name" value="Tyr-tRNA-ligase_3"/>
</dbReference>
<dbReference type="InterPro" id="IPR023617">
    <property type="entry name" value="Tyr-tRNA-ligase_arc/euk-type"/>
</dbReference>
<dbReference type="InterPro" id="IPR050489">
    <property type="entry name" value="Tyr-tRNA_synthase"/>
</dbReference>
<dbReference type="NCBIfam" id="NF006330">
    <property type="entry name" value="PRK08560.1"/>
    <property type="match status" value="1"/>
</dbReference>
<dbReference type="NCBIfam" id="TIGR00234">
    <property type="entry name" value="tyrS"/>
    <property type="match status" value="1"/>
</dbReference>
<dbReference type="PANTHER" id="PTHR46264:SF4">
    <property type="entry name" value="TYROSINE--TRNA LIGASE, CYTOPLASMIC"/>
    <property type="match status" value="1"/>
</dbReference>
<dbReference type="PANTHER" id="PTHR46264">
    <property type="entry name" value="TYROSINE-TRNA LIGASE"/>
    <property type="match status" value="1"/>
</dbReference>
<dbReference type="Pfam" id="PF00579">
    <property type="entry name" value="tRNA-synt_1b"/>
    <property type="match status" value="1"/>
</dbReference>
<dbReference type="PIRSF" id="PIRSF006588">
    <property type="entry name" value="TyrRS_arch_euk"/>
    <property type="match status" value="1"/>
</dbReference>
<dbReference type="PRINTS" id="PR01040">
    <property type="entry name" value="TRNASYNTHTYR"/>
</dbReference>
<dbReference type="SUPFAM" id="SSF52374">
    <property type="entry name" value="Nucleotidylyl transferase"/>
    <property type="match status" value="1"/>
</dbReference>
<dbReference type="PROSITE" id="PS00178">
    <property type="entry name" value="AA_TRNA_LIGASE_I"/>
    <property type="match status" value="1"/>
</dbReference>
<evidence type="ECO:0000255" key="1">
    <source>
        <dbReference type="HAMAP-Rule" id="MF_02008"/>
    </source>
</evidence>
<sequence>MDRLELIRRNVQEIVTEEELEGLLKNKEAPRAYVGYEPSGKIHMGHVLTVNKLIDLQKAGFKITVLLADVHAYLNKKGTLEEVRKIADYNRRCFIALGLDEEQTDFVYGSDFQLGAEYMLNVLKLSRAVTLNRAKRSMDEVGRAMDDPTVSQMVYPLMQAIDIALLEVDVAVGGIDQRKIHMLARENLKSLGFETPICIHTPILLGLDGTKMASSKDNFISIDDTGEDIYRKFKKAFCKIGDVEENPILALFRYHIFPRYETVVIERPEKFGGDITYHSYAEMESNFIEEKVHPMDLKNAAAKYINEILDPVRKVLL</sequence>
<feature type="chain" id="PRO_0000240256" description="Tyrosine--tRNA ligase">
    <location>
        <begin position="1"/>
        <end position="317"/>
    </location>
</feature>
<feature type="short sequence motif" description="'HIGH' region">
    <location>
        <begin position="38"/>
        <end position="46"/>
    </location>
</feature>
<feature type="short sequence motif" description="'KMSKS' region">
    <location>
        <begin position="211"/>
        <end position="215"/>
    </location>
</feature>
<feature type="binding site" evidence="1">
    <location>
        <position position="33"/>
    </location>
    <ligand>
        <name>L-tyrosine</name>
        <dbReference type="ChEBI" id="CHEBI:58315"/>
    </ligand>
</feature>
<feature type="binding site" evidence="1">
    <location>
        <position position="155"/>
    </location>
    <ligand>
        <name>L-tyrosine</name>
        <dbReference type="ChEBI" id="CHEBI:58315"/>
    </ligand>
</feature>
<feature type="binding site" evidence="1">
    <location>
        <position position="159"/>
    </location>
    <ligand>
        <name>L-tyrosine</name>
        <dbReference type="ChEBI" id="CHEBI:58315"/>
    </ligand>
</feature>
<feature type="binding site" evidence="1">
    <location>
        <position position="162"/>
    </location>
    <ligand>
        <name>L-tyrosine</name>
        <dbReference type="ChEBI" id="CHEBI:58315"/>
    </ligand>
</feature>
<feature type="binding site" evidence="1">
    <location>
        <position position="177"/>
    </location>
    <ligand>
        <name>L-tyrosine</name>
        <dbReference type="ChEBI" id="CHEBI:58315"/>
    </ligand>
</feature>
<feature type="binding site" evidence="1">
    <location>
        <position position="214"/>
    </location>
    <ligand>
        <name>ATP</name>
        <dbReference type="ChEBI" id="CHEBI:30616"/>
    </ligand>
</feature>
<comment type="function">
    <text evidence="1">Catalyzes the attachment of tyrosine to tRNA(Tyr) in a two-step reaction: tyrosine is first activated by ATP to form Tyr-AMP and then transferred to the acceptor end of tRNA(Tyr).</text>
</comment>
<comment type="catalytic activity">
    <reaction evidence="1">
        <text>tRNA(Tyr) + L-tyrosine + ATP = L-tyrosyl-tRNA(Tyr) + AMP + diphosphate + H(+)</text>
        <dbReference type="Rhea" id="RHEA:10220"/>
        <dbReference type="Rhea" id="RHEA-COMP:9706"/>
        <dbReference type="Rhea" id="RHEA-COMP:9707"/>
        <dbReference type="ChEBI" id="CHEBI:15378"/>
        <dbReference type="ChEBI" id="CHEBI:30616"/>
        <dbReference type="ChEBI" id="CHEBI:33019"/>
        <dbReference type="ChEBI" id="CHEBI:58315"/>
        <dbReference type="ChEBI" id="CHEBI:78442"/>
        <dbReference type="ChEBI" id="CHEBI:78536"/>
        <dbReference type="ChEBI" id="CHEBI:456215"/>
        <dbReference type="EC" id="6.1.1.1"/>
    </reaction>
</comment>
<comment type="subunit">
    <text evidence="1">Homodimer.</text>
</comment>
<comment type="subcellular location">
    <subcellularLocation>
        <location evidence="1">Cytoplasm</location>
    </subcellularLocation>
</comment>
<comment type="similarity">
    <text evidence="1">Belongs to the class-I aminoacyl-tRNA synthetase family. TyrS type 3 subfamily.</text>
</comment>